<gene>
    <name evidence="12" type="primary">TDH1</name>
    <name type="synonym">GPD1</name>
    <name type="synonym">SSS2</name>
    <name type="ordered locus">YJL052W</name>
    <name type="ORF">J1154</name>
</gene>
<accession>P00360</accession>
<accession>D6VWD1</accession>
<sequence length="332" mass="35750">MIRIAINGFGRIGRLVLRLALQRKDIEVVAVNDPFISNDYAAYMVKYDSTHGRYKGTVSHDDKHIIIDGVKIATYQERDPANLPWGSLKIDVAVDSTGVFKELDTAQKHIDAGAKKVVITAPSSSAPMFVVGVNHTKYTPDKKIVSNASCTTNCLAPLAKVINDAFGIEEGLMTTVHSMTATQKTVDGPSHKDWRGGRTASGNIIPSSTGAAKAVGKVLPELQGKLTGMAFRVPTVDVSVVDLTVKLEKEATYDQIKKAVKAAAEGPMKGVLGYTEDAVVSSDFLGDTHASIFDASAGIQLSPKFVKLISWYDNEYGYSARVVDLIEYVAKA</sequence>
<feature type="chain" id="PRO_0000145589" description="Glyceraldehyde-3-phosphate dehydrogenase 1">
    <location>
        <begin position="1"/>
        <end position="332"/>
    </location>
</feature>
<feature type="active site" description="Nucleophile" evidence="4">
    <location>
        <position position="150"/>
    </location>
</feature>
<feature type="binding site" evidence="1">
    <location>
        <position position="11"/>
    </location>
    <ligand>
        <name>NAD(+)</name>
        <dbReference type="ChEBI" id="CHEBI:57540"/>
    </ligand>
</feature>
<feature type="binding site" evidence="1">
    <location>
        <position position="12"/>
    </location>
    <ligand>
        <name>NAD(+)</name>
        <dbReference type="ChEBI" id="CHEBI:57540"/>
    </ligand>
</feature>
<feature type="binding site" evidence="1">
    <location>
        <position position="33"/>
    </location>
    <ligand>
        <name>NAD(+)</name>
        <dbReference type="ChEBI" id="CHEBI:57540"/>
    </ligand>
</feature>
<feature type="binding site" evidence="1">
    <location>
        <position position="120"/>
    </location>
    <ligand>
        <name>NAD(+)</name>
        <dbReference type="ChEBI" id="CHEBI:57540"/>
    </ligand>
</feature>
<feature type="binding site" evidence="3">
    <location>
        <begin position="149"/>
        <end position="151"/>
    </location>
    <ligand>
        <name>D-glyceraldehyde 3-phosphate</name>
        <dbReference type="ChEBI" id="CHEBI:59776"/>
    </ligand>
</feature>
<feature type="binding site" evidence="3">
    <location>
        <position position="180"/>
    </location>
    <ligand>
        <name>D-glyceraldehyde 3-phosphate</name>
        <dbReference type="ChEBI" id="CHEBI:59776"/>
    </ligand>
</feature>
<feature type="binding site" evidence="3">
    <location>
        <begin position="209"/>
        <end position="210"/>
    </location>
    <ligand>
        <name>D-glyceraldehyde 3-phosphate</name>
        <dbReference type="ChEBI" id="CHEBI:59776"/>
    </ligand>
</feature>
<feature type="binding site" evidence="3">
    <location>
        <position position="232"/>
    </location>
    <ligand>
        <name>D-glyceraldehyde 3-phosphate</name>
        <dbReference type="ChEBI" id="CHEBI:59776"/>
    </ligand>
</feature>
<feature type="binding site" evidence="1">
    <location>
        <position position="314"/>
    </location>
    <ligand>
        <name>NAD(+)</name>
        <dbReference type="ChEBI" id="CHEBI:57540"/>
    </ligand>
</feature>
<feature type="binding site" evidence="1">
    <location>
        <position position="318"/>
    </location>
    <ligand>
        <name>NAD(+)</name>
        <dbReference type="ChEBI" id="CHEBI:57540"/>
    </ligand>
</feature>
<feature type="site" description="Activates thiol group during catalysis" evidence="2">
    <location>
        <position position="177"/>
    </location>
</feature>
<feature type="sequence conflict" description="In Ref. 1; CAA24609." evidence="13" ref="1">
    <original>E</original>
    <variation>A</variation>
    <location>
        <position position="248"/>
    </location>
</feature>
<keyword id="KW-0963">Cytoplasm</keyword>
<keyword id="KW-0903">Direct protein sequencing</keyword>
<keyword id="KW-0324">Glycolysis</keyword>
<keyword id="KW-0520">NAD</keyword>
<keyword id="KW-0560">Oxidoreductase</keyword>
<keyword id="KW-1185">Reference proteome</keyword>
<reference key="1">
    <citation type="journal article" date="1983" name="J. Biol. Chem.">
        <title>Homologous nucleotide sequences at the 5' termini of messenger RNAs synthesized from the yeast enolase and glyceraldehyde-3-phosphate dehydrogenase gene families. The primary structure of a third yeast glyceraldehyde-3-phosphate dehydrogenase gene.</title>
        <authorList>
            <person name="Holland J.P."/>
            <person name="Labieniec L."/>
            <person name="Swimmer C."/>
            <person name="Holland M.J."/>
        </authorList>
    </citation>
    <scope>NUCLEOTIDE SEQUENCE [GENOMIC DNA]</scope>
</reference>
<reference key="2">
    <citation type="journal article" date="1996" name="EMBO J.">
        <title>Complete nucleotide sequence of Saccharomyces cerevisiae chromosome X.</title>
        <authorList>
            <person name="Galibert F."/>
            <person name="Alexandraki D."/>
            <person name="Baur A."/>
            <person name="Boles E."/>
            <person name="Chalwatzis N."/>
            <person name="Chuat J.-C."/>
            <person name="Coster F."/>
            <person name="Cziepluch C."/>
            <person name="de Haan M."/>
            <person name="Domdey H."/>
            <person name="Durand P."/>
            <person name="Entian K.-D."/>
            <person name="Gatius M."/>
            <person name="Goffeau A."/>
            <person name="Grivell L.A."/>
            <person name="Hennemann A."/>
            <person name="Herbert C.J."/>
            <person name="Heumann K."/>
            <person name="Hilger F."/>
            <person name="Hollenberg C.P."/>
            <person name="Huang M.-E."/>
            <person name="Jacq C."/>
            <person name="Jauniaux J.-C."/>
            <person name="Katsoulou C."/>
            <person name="Kirchrath L."/>
            <person name="Kleine K."/>
            <person name="Kordes E."/>
            <person name="Koetter P."/>
            <person name="Liebl S."/>
            <person name="Louis E.J."/>
            <person name="Manus V."/>
            <person name="Mewes H.-W."/>
            <person name="Miosga T."/>
            <person name="Obermaier B."/>
            <person name="Perea J."/>
            <person name="Pohl T.M."/>
            <person name="Portetelle D."/>
            <person name="Pujol A."/>
            <person name="Purnelle B."/>
            <person name="Ramezani Rad M."/>
            <person name="Rasmussen S.W."/>
            <person name="Rose M."/>
            <person name="Rossau R."/>
            <person name="Schaaff-Gerstenschlaeger I."/>
            <person name="Smits P.H.M."/>
            <person name="Scarcez T."/>
            <person name="Soriano N."/>
            <person name="To Van D."/>
            <person name="Tzermia M."/>
            <person name="Van Broekhoven A."/>
            <person name="Vandenbol M."/>
            <person name="Wedler H."/>
            <person name="von Wettstein D."/>
            <person name="Wambutt R."/>
            <person name="Zagulski M."/>
            <person name="Zollner A."/>
            <person name="Karpfinger-Hartl L."/>
        </authorList>
    </citation>
    <scope>NUCLEOTIDE SEQUENCE [LARGE SCALE GENOMIC DNA]</scope>
    <source>
        <strain>ATCC 204508 / S288c</strain>
    </source>
</reference>
<reference key="3">
    <citation type="journal article" date="2014" name="G3 (Bethesda)">
        <title>The reference genome sequence of Saccharomyces cerevisiae: Then and now.</title>
        <authorList>
            <person name="Engel S.R."/>
            <person name="Dietrich F.S."/>
            <person name="Fisk D.G."/>
            <person name="Binkley G."/>
            <person name="Balakrishnan R."/>
            <person name="Costanzo M.C."/>
            <person name="Dwight S.S."/>
            <person name="Hitz B.C."/>
            <person name="Karra K."/>
            <person name="Nash R.S."/>
            <person name="Weng S."/>
            <person name="Wong E.D."/>
            <person name="Lloyd P."/>
            <person name="Skrzypek M.S."/>
            <person name="Miyasato S.R."/>
            <person name="Simison M."/>
            <person name="Cherry J.M."/>
        </authorList>
    </citation>
    <scope>GENOME REANNOTATION</scope>
    <source>
        <strain>ATCC 204508 / S288c</strain>
    </source>
</reference>
<reference key="4">
    <citation type="journal article" date="2007" name="Genome Res.">
        <title>Approaching a complete repository of sequence-verified protein-encoding clones for Saccharomyces cerevisiae.</title>
        <authorList>
            <person name="Hu Y."/>
            <person name="Rolfs A."/>
            <person name="Bhullar B."/>
            <person name="Murthy T.V.S."/>
            <person name="Zhu C."/>
            <person name="Berger M.F."/>
            <person name="Camargo A.A."/>
            <person name="Kelley F."/>
            <person name="McCarron S."/>
            <person name="Jepson D."/>
            <person name="Richardson A."/>
            <person name="Raphael J."/>
            <person name="Moreira D."/>
            <person name="Taycher E."/>
            <person name="Zuo D."/>
            <person name="Mohr S."/>
            <person name="Kane M.F."/>
            <person name="Williamson J."/>
            <person name="Simpson A.J.G."/>
            <person name="Bulyk M.L."/>
            <person name="Harlow E."/>
            <person name="Marsischky G."/>
            <person name="Kolodner R.D."/>
            <person name="LaBaer J."/>
        </authorList>
    </citation>
    <scope>NUCLEOTIDE SEQUENCE [GENOMIC DNA]</scope>
    <source>
        <strain>ATCC 204508 / S288c</strain>
    </source>
</reference>
<reference key="5">
    <citation type="journal article" date="1997" name="Yeast">
        <title>Two-dimensional electrophoretic separation of yeast proteins using a non-linear wide range (pH 3-10) immobilized pH gradient in the first dimension; reproducibility and evidence for isoelectric focusing of alkaline (pI &gt; 7) proteins.</title>
        <authorList>
            <person name="Norbeck J."/>
            <person name="Blomberg A."/>
        </authorList>
    </citation>
    <scope>PROTEIN SEQUENCE OF 64-70 AND 218-225</scope>
    <source>
        <strain>ATCC 44827 / SKQ2N</strain>
    </source>
</reference>
<reference key="6">
    <citation type="journal article" date="2000" name="Syst. Appl. Microbiol.">
        <title>Divergence of glyceraldehyde-3-phosphate dehydrogenase isozymes in Saccharomyces cerevisiae complex.</title>
        <authorList>
            <person name="Kadokura T."/>
            <person name="Ito T."/>
            <person name="Takano S."/>
            <person name="Nakazato A."/>
            <person name="Hara H."/>
            <person name="Watanabe S."/>
            <person name="Kudo T."/>
            <person name="Takeda M."/>
            <person name="Kaneko T."/>
        </authorList>
    </citation>
    <scope>PROTEIN SEQUENCE OF N-TERMINUS</scope>
</reference>
<reference key="7">
    <citation type="journal article" date="1954" name="J. Biol. Chem.">
        <title>The action of glyceraldehyde-3-phosphate dehydrogenase on reduced diphosphopyridine nucleotide.</title>
        <authorList>
            <person name="Rafter G.W."/>
            <person name="Chaykin S."/>
            <person name="Krebs E.G."/>
        </authorList>
    </citation>
    <scope>FUNCTION</scope>
    <scope>CATALYTIC ACTIVITY</scope>
</reference>
<reference key="8">
    <citation type="journal article" date="1974" name="Biochemistry">
        <title>Glyceraldehyde-3-phosphate dehydrogenase catalyzed hydration of the 5-6 double bond of reduced beta-nicotinamide adenine dinucleotide (betaNADH). Formation of beta-6-hydroxy-1,4,5,6-tetrahydronicotinamide adenine dinucleotide.</title>
        <authorList>
            <person name="Oppenheimer N.J."/>
            <person name="Kaplan N.O."/>
        </authorList>
    </citation>
    <scope>FUNCTION</scope>
    <scope>CATALYTIC ACTIVITY</scope>
</reference>
<reference key="9">
    <citation type="journal article" date="1985" name="J. Biol. Chem.">
        <title>Isolation and characterization of yeast strains carrying mutations in the glyceraldehyde-3-phosphate dehydrogenase genes.</title>
        <authorList>
            <person name="McAlister L."/>
            <person name="Holland M.J."/>
        </authorList>
    </citation>
    <scope>FUNCTION</scope>
    <scope>DISRUPTION PHENOTYPE</scope>
</reference>
<reference key="10">
    <citation type="journal article" date="1985" name="J. Biol. Chem.">
        <title>Differential expression of the three yeast glyceraldehyde-3-phosphate dehydrogenase genes.</title>
        <authorList>
            <person name="McAlister L."/>
            <person name="Holland M.J."/>
        </authorList>
    </citation>
    <scope>FUNCTION</scope>
    <scope>SUBUNIT</scope>
    <scope>CATALYTIC ACTIVITY</scope>
</reference>
<reference key="11">
    <citation type="journal article" date="1995" name="FEMS Microbiol. Lett.">
        <title>Differential synthesis of glyceraldehyde-3-phosphate dehydrogenase polypeptides in stressed yeast cells.</title>
        <authorList>
            <person name="Boucherie H."/>
            <person name="Bataille N."/>
            <person name="Fitch I.T."/>
            <person name="Perrot M."/>
            <person name="Tuite M.F."/>
        </authorList>
    </citation>
    <scope>INDUCTION</scope>
    <scope>FUNCTION</scope>
</reference>
<reference key="12">
    <citation type="journal article" date="2001" name="Biochemistry">
        <title>Yeast mitochondrial dehydrogenases are associated in a supramolecular complex.</title>
        <authorList>
            <person name="Grandier-Vazeille X."/>
            <person name="Bathany K."/>
            <person name="Chaignepain S."/>
            <person name="Camougrand N."/>
            <person name="Manon S."/>
            <person name="Schmitter J.-M."/>
        </authorList>
    </citation>
    <scope>SUBCELLULAR LOCATION</scope>
</reference>
<reference key="13">
    <citation type="journal article" date="2003" name="Nature">
        <title>Global analysis of protein expression in yeast.</title>
        <authorList>
            <person name="Ghaemmaghami S."/>
            <person name="Huh W.-K."/>
            <person name="Bower K."/>
            <person name="Howson R.W."/>
            <person name="Belle A."/>
            <person name="Dephoure N."/>
            <person name="O'Shea E.K."/>
            <person name="Weissman J.S."/>
        </authorList>
    </citation>
    <scope>LEVEL OF PROTEIN EXPRESSION [LARGE SCALE ANALYSIS]</scope>
</reference>
<proteinExistence type="evidence at protein level"/>
<organism>
    <name type="scientific">Saccharomyces cerevisiae (strain ATCC 204508 / S288c)</name>
    <name type="common">Baker's yeast</name>
    <dbReference type="NCBI Taxonomy" id="559292"/>
    <lineage>
        <taxon>Eukaryota</taxon>
        <taxon>Fungi</taxon>
        <taxon>Dikarya</taxon>
        <taxon>Ascomycota</taxon>
        <taxon>Saccharomycotina</taxon>
        <taxon>Saccharomycetes</taxon>
        <taxon>Saccharomycetales</taxon>
        <taxon>Saccharomycetaceae</taxon>
        <taxon>Saccharomyces</taxon>
    </lineage>
</organism>
<evidence type="ECO:0000250" key="1">
    <source>
        <dbReference type="UniProtKB" id="P00359"/>
    </source>
</evidence>
<evidence type="ECO:0000250" key="2">
    <source>
        <dbReference type="UniProtKB" id="P04406"/>
    </source>
</evidence>
<evidence type="ECO:0000250" key="3">
    <source>
        <dbReference type="UniProtKB" id="P22513"/>
    </source>
</evidence>
<evidence type="ECO:0000255" key="4">
    <source>
        <dbReference type="PROSITE-ProRule" id="PRU10009"/>
    </source>
</evidence>
<evidence type="ECO:0000269" key="5">
    <source>
    </source>
</evidence>
<evidence type="ECO:0000269" key="6">
    <source>
    </source>
</evidence>
<evidence type="ECO:0000269" key="7">
    <source>
    </source>
</evidence>
<evidence type="ECO:0000269" key="8">
    <source>
    </source>
</evidence>
<evidence type="ECO:0000269" key="9">
    <source>
    </source>
</evidence>
<evidence type="ECO:0000269" key="10">
    <source>
    </source>
</evidence>
<evidence type="ECO:0000269" key="11">
    <source>
    </source>
</evidence>
<evidence type="ECO:0000303" key="12">
    <source>
    </source>
</evidence>
<evidence type="ECO:0000305" key="13"/>
<comment type="function">
    <text evidence="8 9 11">Glyceraldehyde-3-phosphate dehydrogenase (GAPDH) involved in glycolysis and gluconeogenesis (PubMed:2999100). Catalyzes the reaction of glyceraldehyde-3-phosphate to 1,3 bis-phosphoglycerate (PubMed:3905788). The contribution of the TDH1, TDH2, and TDH3 to the total glyceraldehyde-3-phosphate dehydrogenase activity is 10-15, 25-30, and 50-60%, respectively (PubMed:3905788). May be involved in a process other than glycolysis because it is synthesized by cells in stationary phase (PubMed:7875559).</text>
</comment>
<comment type="function">
    <text evidence="6 10">As a side activity, catalyzes the hydration of the nicotinamide ring of NADH or NADPH at the C6 position to give the corresponding hydrates, NADHX and NADPHX, which exist as R and S epimers, that cannot act as electron donors or acceptors and inhibit several dehydrogenases, making them toxic.</text>
</comment>
<comment type="catalytic activity">
    <reaction evidence="9">
        <text>D-glyceraldehyde 3-phosphate + phosphate + NAD(+) = (2R)-3-phospho-glyceroyl phosphate + NADH + H(+)</text>
        <dbReference type="Rhea" id="RHEA:10300"/>
        <dbReference type="ChEBI" id="CHEBI:15378"/>
        <dbReference type="ChEBI" id="CHEBI:43474"/>
        <dbReference type="ChEBI" id="CHEBI:57540"/>
        <dbReference type="ChEBI" id="CHEBI:57604"/>
        <dbReference type="ChEBI" id="CHEBI:57945"/>
        <dbReference type="ChEBI" id="CHEBI:59776"/>
        <dbReference type="EC" id="1.2.1.12"/>
    </reaction>
    <physiologicalReaction direction="left-to-right" evidence="9">
        <dbReference type="Rhea" id="RHEA:10301"/>
    </physiologicalReaction>
</comment>
<comment type="catalytic activity">
    <reaction evidence="6 10">
        <text>NADH + H2O = (6R)-NADHX</text>
        <dbReference type="Rhea" id="RHEA:57360"/>
        <dbReference type="ChEBI" id="CHEBI:15377"/>
        <dbReference type="ChEBI" id="CHEBI:57945"/>
        <dbReference type="ChEBI" id="CHEBI:64075"/>
    </reaction>
    <physiologicalReaction direction="left-to-right" evidence="6 10">
        <dbReference type="Rhea" id="RHEA:57361"/>
    </physiologicalReaction>
</comment>
<comment type="catalytic activity">
    <reaction evidence="6 10">
        <text>NADH + H2O = (6S)-NADHX</text>
        <dbReference type="Rhea" id="RHEA:57364"/>
        <dbReference type="ChEBI" id="CHEBI:15377"/>
        <dbReference type="ChEBI" id="CHEBI:57945"/>
        <dbReference type="ChEBI" id="CHEBI:64074"/>
    </reaction>
    <physiologicalReaction direction="left-to-right" evidence="6 10">
        <dbReference type="Rhea" id="RHEA:57365"/>
    </physiologicalReaction>
</comment>
<comment type="catalytic activity">
    <reaction evidence="6 10">
        <text>NADPH + H2O = (6R)-NADPHX</text>
        <dbReference type="Rhea" id="RHEA:57368"/>
        <dbReference type="ChEBI" id="CHEBI:15377"/>
        <dbReference type="ChEBI" id="CHEBI:57783"/>
        <dbReference type="ChEBI" id="CHEBI:64077"/>
    </reaction>
    <physiologicalReaction direction="left-to-right" evidence="6 10">
        <dbReference type="Rhea" id="RHEA:57369"/>
    </physiologicalReaction>
</comment>
<comment type="catalytic activity">
    <reaction evidence="6 10">
        <text>NADPH + H2O = (6S)-NADPHX</text>
        <dbReference type="Rhea" id="RHEA:57372"/>
        <dbReference type="ChEBI" id="CHEBI:15377"/>
        <dbReference type="ChEBI" id="CHEBI:57783"/>
        <dbReference type="ChEBI" id="CHEBI:64076"/>
    </reaction>
    <physiologicalReaction direction="left-to-right" evidence="6 10">
        <dbReference type="Rhea" id="RHEA:57373"/>
    </physiologicalReaction>
</comment>
<comment type="pathway">
    <text evidence="9">Carbohydrate degradation; glycolysis; pyruvate from D-glyceraldehyde 3-phosphate: step 1/5.</text>
</comment>
<comment type="subunit">
    <text evidence="9">Homotetramer.</text>
</comment>
<comment type="subcellular location">
    <subcellularLocation>
        <location evidence="5">Cytoplasm</location>
    </subcellularLocation>
</comment>
<comment type="induction">
    <text evidence="11">Expressed when cells enter stationary phase, due to glucose starvation, or in heat-shocked cells.</text>
</comment>
<comment type="disruption phenotype">
    <text evidence="8">Does not affect growth when ethanol is used as carbon source but impairs growth when glucose is used as carbon source.</text>
</comment>
<comment type="miscellaneous">
    <text evidence="7">Present with 120000 molecules/cell in log phase SD medium.</text>
</comment>
<comment type="similarity">
    <text evidence="13">Belongs to the glyceraldehyde-3-phosphate dehydrogenase family.</text>
</comment>
<name>G3P1_YEAST</name>
<protein>
    <recommendedName>
        <fullName evidence="12">Glyceraldehyde-3-phosphate dehydrogenase 1</fullName>
        <shortName evidence="12">GAPDH 1</shortName>
        <ecNumber evidence="9">1.2.1.12</ecNumber>
    </recommendedName>
    <alternativeName>
        <fullName evidence="12">Triose-phosphate dehydrogenase 1</fullName>
    </alternativeName>
</protein>
<dbReference type="EC" id="1.2.1.12" evidence="9"/>
<dbReference type="EMBL" id="V01302">
    <property type="protein sequence ID" value="CAA24609.1"/>
    <property type="molecule type" value="Genomic_DNA"/>
</dbReference>
<dbReference type="EMBL" id="Z49327">
    <property type="protein sequence ID" value="CAA89343.1"/>
    <property type="molecule type" value="Genomic_DNA"/>
</dbReference>
<dbReference type="EMBL" id="AY693001">
    <property type="protein sequence ID" value="AAT93020.1"/>
    <property type="molecule type" value="Genomic_DNA"/>
</dbReference>
<dbReference type="EMBL" id="BK006943">
    <property type="protein sequence ID" value="DAA08747.1"/>
    <property type="molecule type" value="Genomic_DNA"/>
</dbReference>
<dbReference type="PIR" id="S56824">
    <property type="entry name" value="DEBYG3"/>
</dbReference>
<dbReference type="RefSeq" id="NP_012483.3">
    <property type="nucleotide sequence ID" value="NM_001181485.3"/>
</dbReference>
<dbReference type="SMR" id="P00360"/>
<dbReference type="BioGRID" id="33703">
    <property type="interactions" value="142"/>
</dbReference>
<dbReference type="DIP" id="DIP-4304N"/>
<dbReference type="FunCoup" id="P00360">
    <property type="interactions" value="1332"/>
</dbReference>
<dbReference type="IntAct" id="P00360">
    <property type="interactions" value="83"/>
</dbReference>
<dbReference type="MINT" id="P00360"/>
<dbReference type="STRING" id="4932.YJL052W"/>
<dbReference type="MoonDB" id="P00360">
    <property type="type" value="Curated"/>
</dbReference>
<dbReference type="iPTMnet" id="P00360"/>
<dbReference type="PaxDb" id="4932-YJL052W"/>
<dbReference type="PeptideAtlas" id="P00360"/>
<dbReference type="TopDownProteomics" id="P00360"/>
<dbReference type="EnsemblFungi" id="YJL052W_mRNA">
    <property type="protein sequence ID" value="YJL052W"/>
    <property type="gene ID" value="YJL052W"/>
</dbReference>
<dbReference type="GeneID" id="853395"/>
<dbReference type="KEGG" id="sce:YJL052W"/>
<dbReference type="AGR" id="SGD:S000003588"/>
<dbReference type="SGD" id="S000003588">
    <property type="gene designation" value="TDH1"/>
</dbReference>
<dbReference type="VEuPathDB" id="FungiDB:YJL052W"/>
<dbReference type="eggNOG" id="KOG0657">
    <property type="taxonomic scope" value="Eukaryota"/>
</dbReference>
<dbReference type="GeneTree" id="ENSGT00940000153298"/>
<dbReference type="HOGENOM" id="CLU_030140_0_3_1"/>
<dbReference type="InParanoid" id="P00360"/>
<dbReference type="OMA" id="NMHITVF"/>
<dbReference type="OrthoDB" id="1152826at2759"/>
<dbReference type="BioCyc" id="YEAST:YJL052W-MONOMER"/>
<dbReference type="Reactome" id="R-SCE-70171">
    <property type="pathway name" value="Glycolysis"/>
</dbReference>
<dbReference type="Reactome" id="R-SCE-70263">
    <property type="pathway name" value="Gluconeogenesis"/>
</dbReference>
<dbReference type="SABIO-RK" id="P00360"/>
<dbReference type="UniPathway" id="UPA00109">
    <property type="reaction ID" value="UER00184"/>
</dbReference>
<dbReference type="BioGRID-ORCS" id="853395">
    <property type="hits" value="0 hits in 10 CRISPR screens"/>
</dbReference>
<dbReference type="ChiTaRS" id="GPD1">
    <property type="organism name" value="yeast"/>
</dbReference>
<dbReference type="PRO" id="PR:P00360"/>
<dbReference type="Proteomes" id="UP000002311">
    <property type="component" value="Chromosome X"/>
</dbReference>
<dbReference type="RNAct" id="P00360">
    <property type="molecule type" value="protein"/>
</dbReference>
<dbReference type="GO" id="GO:0005829">
    <property type="term" value="C:cytosol"/>
    <property type="evidence" value="ECO:0000314"/>
    <property type="project" value="SGD"/>
</dbReference>
<dbReference type="GO" id="GO:0009277">
    <property type="term" value="C:fungal-type cell wall"/>
    <property type="evidence" value="ECO:0000314"/>
    <property type="project" value="SGD"/>
</dbReference>
<dbReference type="GO" id="GO:0005811">
    <property type="term" value="C:lipid droplet"/>
    <property type="evidence" value="ECO:0000314"/>
    <property type="project" value="SGD"/>
</dbReference>
<dbReference type="GO" id="GO:0005739">
    <property type="term" value="C:mitochondrion"/>
    <property type="evidence" value="ECO:0000314"/>
    <property type="project" value="SGD"/>
</dbReference>
<dbReference type="GO" id="GO:0005886">
    <property type="term" value="C:plasma membrane"/>
    <property type="evidence" value="ECO:0007005"/>
    <property type="project" value="SGD"/>
</dbReference>
<dbReference type="GO" id="GO:0004365">
    <property type="term" value="F:glyceraldehyde-3-phosphate dehydrogenase (NAD+) (phosphorylating) activity"/>
    <property type="evidence" value="ECO:0000314"/>
    <property type="project" value="SGD"/>
</dbReference>
<dbReference type="GO" id="GO:1904408">
    <property type="term" value="F:melatonin binding"/>
    <property type="evidence" value="ECO:0000314"/>
    <property type="project" value="SGD"/>
</dbReference>
<dbReference type="GO" id="GO:0051287">
    <property type="term" value="F:NAD binding"/>
    <property type="evidence" value="ECO:0007669"/>
    <property type="project" value="InterPro"/>
</dbReference>
<dbReference type="GO" id="GO:0050661">
    <property type="term" value="F:NADP binding"/>
    <property type="evidence" value="ECO:0007669"/>
    <property type="project" value="InterPro"/>
</dbReference>
<dbReference type="GO" id="GO:0006094">
    <property type="term" value="P:gluconeogenesis"/>
    <property type="evidence" value="ECO:0000270"/>
    <property type="project" value="SGD"/>
</dbReference>
<dbReference type="GO" id="GO:0006096">
    <property type="term" value="P:glycolytic process"/>
    <property type="evidence" value="ECO:0000270"/>
    <property type="project" value="SGD"/>
</dbReference>
<dbReference type="CDD" id="cd18126">
    <property type="entry name" value="GAPDH_I_C"/>
    <property type="match status" value="1"/>
</dbReference>
<dbReference type="CDD" id="cd05214">
    <property type="entry name" value="GAPDH_I_N"/>
    <property type="match status" value="1"/>
</dbReference>
<dbReference type="FunFam" id="3.30.360.10:FF:000001">
    <property type="entry name" value="Glyceraldehyde-3-phosphate dehydrogenase"/>
    <property type="match status" value="1"/>
</dbReference>
<dbReference type="FunFam" id="3.40.50.720:FF:000020">
    <property type="entry name" value="Glyceraldehyde-3-phosphate dehydrogenase"/>
    <property type="match status" value="1"/>
</dbReference>
<dbReference type="Gene3D" id="3.30.360.10">
    <property type="entry name" value="Dihydrodipicolinate Reductase, domain 2"/>
    <property type="match status" value="1"/>
</dbReference>
<dbReference type="Gene3D" id="3.40.50.720">
    <property type="entry name" value="NAD(P)-binding Rossmann-like Domain"/>
    <property type="match status" value="1"/>
</dbReference>
<dbReference type="InterPro" id="IPR020831">
    <property type="entry name" value="GlycerAld/Erythrose_P_DH"/>
</dbReference>
<dbReference type="InterPro" id="IPR020830">
    <property type="entry name" value="GlycerAld_3-P_DH_AS"/>
</dbReference>
<dbReference type="InterPro" id="IPR020829">
    <property type="entry name" value="GlycerAld_3-P_DH_cat"/>
</dbReference>
<dbReference type="InterPro" id="IPR020828">
    <property type="entry name" value="GlycerAld_3-P_DH_NAD(P)-bd"/>
</dbReference>
<dbReference type="InterPro" id="IPR006424">
    <property type="entry name" value="Glyceraldehyde-3-P_DH_1"/>
</dbReference>
<dbReference type="InterPro" id="IPR036291">
    <property type="entry name" value="NAD(P)-bd_dom_sf"/>
</dbReference>
<dbReference type="NCBIfam" id="TIGR01534">
    <property type="entry name" value="GAPDH-I"/>
    <property type="match status" value="1"/>
</dbReference>
<dbReference type="PANTHER" id="PTHR10836">
    <property type="entry name" value="GLYCERALDEHYDE 3-PHOSPHATE DEHYDROGENASE"/>
    <property type="match status" value="1"/>
</dbReference>
<dbReference type="PANTHER" id="PTHR10836:SF76">
    <property type="entry name" value="GLYCERALDEHYDE-3-PHOSPHATE DEHYDROGENASE-RELATED"/>
    <property type="match status" value="1"/>
</dbReference>
<dbReference type="Pfam" id="PF02800">
    <property type="entry name" value="Gp_dh_C"/>
    <property type="match status" value="1"/>
</dbReference>
<dbReference type="Pfam" id="PF00044">
    <property type="entry name" value="Gp_dh_N"/>
    <property type="match status" value="1"/>
</dbReference>
<dbReference type="PIRSF" id="PIRSF000149">
    <property type="entry name" value="GAP_DH"/>
    <property type="match status" value="1"/>
</dbReference>
<dbReference type="PRINTS" id="PR00078">
    <property type="entry name" value="G3PDHDRGNASE"/>
</dbReference>
<dbReference type="SMART" id="SM00846">
    <property type="entry name" value="Gp_dh_N"/>
    <property type="match status" value="1"/>
</dbReference>
<dbReference type="SUPFAM" id="SSF55347">
    <property type="entry name" value="Glyceraldehyde-3-phosphate dehydrogenase-like, C-terminal domain"/>
    <property type="match status" value="1"/>
</dbReference>
<dbReference type="SUPFAM" id="SSF51735">
    <property type="entry name" value="NAD(P)-binding Rossmann-fold domains"/>
    <property type="match status" value="1"/>
</dbReference>
<dbReference type="PROSITE" id="PS00071">
    <property type="entry name" value="GAPDH"/>
    <property type="match status" value="1"/>
</dbReference>